<organism>
    <name type="scientific">Sordaria macrospora (strain ATCC MYA-333 / DSM 997 / K(L3346) / K-hell)</name>
    <dbReference type="NCBI Taxonomy" id="771870"/>
    <lineage>
        <taxon>Eukaryota</taxon>
        <taxon>Fungi</taxon>
        <taxon>Dikarya</taxon>
        <taxon>Ascomycota</taxon>
        <taxon>Pezizomycotina</taxon>
        <taxon>Sordariomycetes</taxon>
        <taxon>Sordariomycetidae</taxon>
        <taxon>Sordariales</taxon>
        <taxon>Sordariaceae</taxon>
        <taxon>Sordaria</taxon>
    </lineage>
</organism>
<dbReference type="EC" id="4.1.1.23"/>
<dbReference type="EMBL" id="Z70291">
    <property type="protein sequence ID" value="CAA94305.1"/>
    <property type="molecule type" value="Genomic_DNA"/>
</dbReference>
<dbReference type="EMBL" id="CABT02000042">
    <property type="protein sequence ID" value="CCC13658.1"/>
    <property type="molecule type" value="Genomic_DNA"/>
</dbReference>
<dbReference type="RefSeq" id="XP_003344657.1">
    <property type="nucleotide sequence ID" value="XM_003344609.1"/>
</dbReference>
<dbReference type="SMR" id="P78748"/>
<dbReference type="FunCoup" id="P78748">
    <property type="interactions" value="1063"/>
</dbReference>
<dbReference type="STRING" id="771870.P78748"/>
<dbReference type="GeneID" id="10801959"/>
<dbReference type="KEGG" id="smp:10801959"/>
<dbReference type="VEuPathDB" id="FungiDB:SMAC_07225"/>
<dbReference type="eggNOG" id="KOG1377">
    <property type="taxonomic scope" value="Eukaryota"/>
</dbReference>
<dbReference type="HOGENOM" id="CLU_030821_1_1_1"/>
<dbReference type="InParanoid" id="P78748"/>
<dbReference type="OMA" id="CLIKTHI"/>
<dbReference type="OrthoDB" id="10263753at2759"/>
<dbReference type="UniPathway" id="UPA00070">
    <property type="reaction ID" value="UER00120"/>
</dbReference>
<dbReference type="Proteomes" id="UP000001881">
    <property type="component" value="Unassembled WGS sequence"/>
</dbReference>
<dbReference type="GO" id="GO:0005829">
    <property type="term" value="C:cytosol"/>
    <property type="evidence" value="ECO:0007669"/>
    <property type="project" value="TreeGrafter"/>
</dbReference>
<dbReference type="GO" id="GO:0004590">
    <property type="term" value="F:orotidine-5'-phosphate decarboxylase activity"/>
    <property type="evidence" value="ECO:0007669"/>
    <property type="project" value="UniProtKB-EC"/>
</dbReference>
<dbReference type="GO" id="GO:0006207">
    <property type="term" value="P:'de novo' pyrimidine nucleobase biosynthetic process"/>
    <property type="evidence" value="ECO:0007669"/>
    <property type="project" value="InterPro"/>
</dbReference>
<dbReference type="GO" id="GO:0044205">
    <property type="term" value="P:'de novo' UMP biosynthetic process"/>
    <property type="evidence" value="ECO:0007669"/>
    <property type="project" value="UniProtKB-UniPathway"/>
</dbReference>
<dbReference type="CDD" id="cd04725">
    <property type="entry name" value="OMP_decarboxylase_like"/>
    <property type="match status" value="1"/>
</dbReference>
<dbReference type="Gene3D" id="3.20.20.70">
    <property type="entry name" value="Aldolase class I"/>
    <property type="match status" value="1"/>
</dbReference>
<dbReference type="InterPro" id="IPR013785">
    <property type="entry name" value="Aldolase_TIM"/>
</dbReference>
<dbReference type="InterPro" id="IPR014732">
    <property type="entry name" value="OMPdecase"/>
</dbReference>
<dbReference type="InterPro" id="IPR018089">
    <property type="entry name" value="OMPdecase_AS"/>
</dbReference>
<dbReference type="InterPro" id="IPR001754">
    <property type="entry name" value="OMPdeCOase_dom"/>
</dbReference>
<dbReference type="InterPro" id="IPR011060">
    <property type="entry name" value="RibuloseP-bd_barrel"/>
</dbReference>
<dbReference type="PANTHER" id="PTHR32119">
    <property type="entry name" value="OROTIDINE 5'-PHOSPHATE DECARBOXYLASE"/>
    <property type="match status" value="1"/>
</dbReference>
<dbReference type="PANTHER" id="PTHR32119:SF2">
    <property type="entry name" value="OROTIDINE 5'-PHOSPHATE DECARBOXYLASE"/>
    <property type="match status" value="1"/>
</dbReference>
<dbReference type="Pfam" id="PF00215">
    <property type="entry name" value="OMPdecase"/>
    <property type="match status" value="1"/>
</dbReference>
<dbReference type="SMART" id="SM00934">
    <property type="entry name" value="OMPdecase"/>
    <property type="match status" value="1"/>
</dbReference>
<dbReference type="SUPFAM" id="SSF51366">
    <property type="entry name" value="Ribulose-phoshate binding barrel"/>
    <property type="match status" value="1"/>
</dbReference>
<dbReference type="PROSITE" id="PS00156">
    <property type="entry name" value="OMPDECASE"/>
    <property type="match status" value="1"/>
</dbReference>
<feature type="chain" id="PRO_0000134685" description="Orotidine 5'-phosphate decarboxylase">
    <location>
        <begin position="1"/>
        <end position="396"/>
    </location>
</feature>
<feature type="active site" description="Proton donor" evidence="2">
    <location>
        <position position="105"/>
    </location>
</feature>
<feature type="binding site" evidence="1">
    <location>
        <position position="46"/>
    </location>
    <ligand>
        <name>substrate</name>
    </ligand>
</feature>
<feature type="binding site" evidence="1">
    <location>
        <begin position="68"/>
        <end position="70"/>
    </location>
    <ligand>
        <name>substrate</name>
    </ligand>
</feature>
<feature type="binding site" evidence="1">
    <location>
        <begin position="103"/>
        <end position="112"/>
    </location>
    <ligand>
        <name>substrate</name>
    </ligand>
</feature>
<feature type="binding site" evidence="1">
    <location>
        <position position="346"/>
    </location>
    <ligand>
        <name>substrate</name>
    </ligand>
</feature>
<feature type="binding site" evidence="1">
    <location>
        <position position="365"/>
    </location>
    <ligand>
        <name>substrate</name>
    </ligand>
</feature>
<feature type="sequence conflict" description="In Ref. 1; CAA94305." evidence="3" ref="1">
    <original>A</original>
    <variation>D</variation>
    <location>
        <position position="45"/>
    </location>
</feature>
<sequence length="396" mass="43764">MSTTQQPHWSLQKSFAERVESSSHPLTSYLFRLMEVKQSNLCLSADVEHARELLALADKIGPSIVVLKTHYDLITGWDYHPHTGTGAKLAALARKHGFLIFEDRKFVDIGSTVQKQYTAGTARIVEWAHITNADIHAGEAMVSAMAQAAQKWRERIPYEVKTSVSVGTPVADQFADEEAEDQVDELRKIVPRENSTSKEKDTDGRKGSIVSITTVTQTYEPADSPRLAKTISEGDEAVFPGIEEAPLDRGLLILAQMSSKGCLMDGKYTWECVKAARKNKDFVMGYVAQQNLNGITKEDLAPGYEDGETSTEEEAQADNFIHMTPGCKLPPPGEEAPQGDGLGQQYNTPDNLVNIKGTDIAIVGRGIITASDPPAEAERYRRKAWKAYQDRRERLA</sequence>
<accession>P78748</accession>
<accession>D1ZSM5</accession>
<accession>F7W814</accession>
<keyword id="KW-0210">Decarboxylase</keyword>
<keyword id="KW-0456">Lyase</keyword>
<keyword id="KW-0665">Pyrimidine biosynthesis</keyword>
<keyword id="KW-1185">Reference proteome</keyword>
<reference key="1">
    <citation type="journal article" date="1998" name="Fungal Genet. Newsl.">
        <title>Isolation and cloning of the Sordaria macrospora ura3 gene and its heterologous expression in Aspergillus niger.</title>
        <authorList>
            <person name="Nowrousian M."/>
            <person name="Kueck U."/>
        </authorList>
    </citation>
    <scope>NUCLEOTIDE SEQUENCE [GENOMIC DNA]</scope>
    <source>
        <strain>ATCC MYA-333 / DSM 997 / K(L3346) / K-hell</strain>
    </source>
</reference>
<reference key="2">
    <citation type="journal article" date="2010" name="PLoS Genet.">
        <title>De novo assembly of a 40 Mb eukaryotic genome from short sequence reads: Sordaria macrospora, a model organism for fungal morphogenesis.</title>
        <authorList>
            <person name="Nowrousian M."/>
            <person name="Stajich J.E."/>
            <person name="Chu M."/>
            <person name="Engh I."/>
            <person name="Espagne E."/>
            <person name="Halliday K."/>
            <person name="Kamerewerd J."/>
            <person name="Kempken F."/>
            <person name="Knab B."/>
            <person name="Kuo H.-C."/>
            <person name="Osiewacz H.D."/>
            <person name="Poeggeler S."/>
            <person name="Read N.D."/>
            <person name="Seiler S."/>
            <person name="Smith K.M."/>
            <person name="Zickler D."/>
            <person name="Kueck U."/>
            <person name="Freitag M."/>
        </authorList>
    </citation>
    <scope>NUCLEOTIDE SEQUENCE [LARGE SCALE GENOMIC DNA]</scope>
    <source>
        <strain>ATCC MYA-333 / DSM 997 / K(L3346) / K-hell</strain>
    </source>
</reference>
<gene>
    <name type="primary">URA3</name>
    <name type="ORF">SMAC_07225</name>
</gene>
<name>PYRF_SORMK</name>
<proteinExistence type="inferred from homology"/>
<evidence type="ECO:0000250" key="1"/>
<evidence type="ECO:0000255" key="2">
    <source>
        <dbReference type="PROSITE-ProRule" id="PRU10110"/>
    </source>
</evidence>
<evidence type="ECO:0000305" key="3"/>
<comment type="catalytic activity">
    <reaction evidence="2">
        <text>orotidine 5'-phosphate + H(+) = UMP + CO2</text>
        <dbReference type="Rhea" id="RHEA:11596"/>
        <dbReference type="ChEBI" id="CHEBI:15378"/>
        <dbReference type="ChEBI" id="CHEBI:16526"/>
        <dbReference type="ChEBI" id="CHEBI:57538"/>
        <dbReference type="ChEBI" id="CHEBI:57865"/>
        <dbReference type="EC" id="4.1.1.23"/>
    </reaction>
</comment>
<comment type="pathway">
    <text>Pyrimidine metabolism; UMP biosynthesis via de novo pathway; UMP from orotate: step 2/2.</text>
</comment>
<comment type="similarity">
    <text evidence="3">Belongs to the OMP decarboxylase family.</text>
</comment>
<protein>
    <recommendedName>
        <fullName>Orotidine 5'-phosphate decarboxylase</fullName>
        <ecNumber>4.1.1.23</ecNumber>
    </recommendedName>
    <alternativeName>
        <fullName>OMP decarboxylase</fullName>
        <shortName>OMPDCase</shortName>
        <shortName>OMPdecase</shortName>
    </alternativeName>
    <alternativeName>
        <fullName>Uridine 5'-monophosphate synthase</fullName>
        <shortName>UMP synthase</shortName>
    </alternativeName>
</protein>